<protein>
    <recommendedName>
        <fullName evidence="9">Moesin a</fullName>
    </recommendedName>
    <alternativeName>
        <fullName evidence="6">Membrane-organizing extension spike protein</fullName>
    </alternativeName>
    <alternativeName>
        <fullName evidence="5">Moesin 1</fullName>
    </alternativeName>
</protein>
<gene>
    <name evidence="9" type="primary">msna</name>
    <name evidence="9" type="synonym">rdx</name>
</gene>
<reference evidence="8" key="1">
    <citation type="journal article" date="2013" name="Nature">
        <title>The zebrafish reference genome sequence and its relationship to the human genome.</title>
        <authorList>
            <person name="Howe K."/>
            <person name="Clark M.D."/>
            <person name="Torroja C.F."/>
            <person name="Torrance J."/>
            <person name="Berthelot C."/>
            <person name="Muffato M."/>
            <person name="Collins J.E."/>
            <person name="Humphray S."/>
            <person name="McLaren K."/>
            <person name="Matthews L."/>
            <person name="McLaren S."/>
            <person name="Sealy I."/>
            <person name="Caccamo M."/>
            <person name="Churcher C."/>
            <person name="Scott C."/>
            <person name="Barrett J.C."/>
            <person name="Koch R."/>
            <person name="Rauch G.J."/>
            <person name="White S."/>
            <person name="Chow W."/>
            <person name="Kilian B."/>
            <person name="Quintais L.T."/>
            <person name="Guerra-Assuncao J.A."/>
            <person name="Zhou Y."/>
            <person name="Gu Y."/>
            <person name="Yen J."/>
            <person name="Vogel J.H."/>
            <person name="Eyre T."/>
            <person name="Redmond S."/>
            <person name="Banerjee R."/>
            <person name="Chi J."/>
            <person name="Fu B."/>
            <person name="Langley E."/>
            <person name="Maguire S.F."/>
            <person name="Laird G.K."/>
            <person name="Lloyd D."/>
            <person name="Kenyon E."/>
            <person name="Donaldson S."/>
            <person name="Sehra H."/>
            <person name="Almeida-King J."/>
            <person name="Loveland J."/>
            <person name="Trevanion S."/>
            <person name="Jones M."/>
            <person name="Quail M."/>
            <person name="Willey D."/>
            <person name="Hunt A."/>
            <person name="Burton J."/>
            <person name="Sims S."/>
            <person name="McLay K."/>
            <person name="Plumb B."/>
            <person name="Davis J."/>
            <person name="Clee C."/>
            <person name="Oliver K."/>
            <person name="Clark R."/>
            <person name="Riddle C."/>
            <person name="Elliot D."/>
            <person name="Threadgold G."/>
            <person name="Harden G."/>
            <person name="Ware D."/>
            <person name="Begum S."/>
            <person name="Mortimore B."/>
            <person name="Kerry G."/>
            <person name="Heath P."/>
            <person name="Phillimore B."/>
            <person name="Tracey A."/>
            <person name="Corby N."/>
            <person name="Dunn M."/>
            <person name="Johnson C."/>
            <person name="Wood J."/>
            <person name="Clark S."/>
            <person name="Pelan S."/>
            <person name="Griffiths G."/>
            <person name="Smith M."/>
            <person name="Glithero R."/>
            <person name="Howden P."/>
            <person name="Barker N."/>
            <person name="Lloyd C."/>
            <person name="Stevens C."/>
            <person name="Harley J."/>
            <person name="Holt K."/>
            <person name="Panagiotidis G."/>
            <person name="Lovell J."/>
            <person name="Beasley H."/>
            <person name="Henderson C."/>
            <person name="Gordon D."/>
            <person name="Auger K."/>
            <person name="Wright D."/>
            <person name="Collins J."/>
            <person name="Raisen C."/>
            <person name="Dyer L."/>
            <person name="Leung K."/>
            <person name="Robertson L."/>
            <person name="Ambridge K."/>
            <person name="Leongamornlert D."/>
            <person name="McGuire S."/>
            <person name="Gilderthorp R."/>
            <person name="Griffiths C."/>
            <person name="Manthravadi D."/>
            <person name="Nichol S."/>
            <person name="Barker G."/>
            <person name="Whitehead S."/>
            <person name="Kay M."/>
            <person name="Brown J."/>
            <person name="Murnane C."/>
            <person name="Gray E."/>
            <person name="Humphries M."/>
            <person name="Sycamore N."/>
            <person name="Barker D."/>
            <person name="Saunders D."/>
            <person name="Wallis J."/>
            <person name="Babbage A."/>
            <person name="Hammond S."/>
            <person name="Mashreghi-Mohammadi M."/>
            <person name="Barr L."/>
            <person name="Martin S."/>
            <person name="Wray P."/>
            <person name="Ellington A."/>
            <person name="Matthews N."/>
            <person name="Ellwood M."/>
            <person name="Woodmansey R."/>
            <person name="Clark G."/>
            <person name="Cooper J."/>
            <person name="Tromans A."/>
            <person name="Grafham D."/>
            <person name="Skuce C."/>
            <person name="Pandian R."/>
            <person name="Andrews R."/>
            <person name="Harrison E."/>
            <person name="Kimberley A."/>
            <person name="Garnett J."/>
            <person name="Fosker N."/>
            <person name="Hall R."/>
            <person name="Garner P."/>
            <person name="Kelly D."/>
            <person name="Bird C."/>
            <person name="Palmer S."/>
            <person name="Gehring I."/>
            <person name="Berger A."/>
            <person name="Dooley C.M."/>
            <person name="Ersan-Urun Z."/>
            <person name="Eser C."/>
            <person name="Geiger H."/>
            <person name="Geisler M."/>
            <person name="Karotki L."/>
            <person name="Kirn A."/>
            <person name="Konantz J."/>
            <person name="Konantz M."/>
            <person name="Oberlander M."/>
            <person name="Rudolph-Geiger S."/>
            <person name="Teucke M."/>
            <person name="Lanz C."/>
            <person name="Raddatz G."/>
            <person name="Osoegawa K."/>
            <person name="Zhu B."/>
            <person name="Rapp A."/>
            <person name="Widaa S."/>
            <person name="Langford C."/>
            <person name="Yang F."/>
            <person name="Schuster S.C."/>
            <person name="Carter N.P."/>
            <person name="Harrow J."/>
            <person name="Ning Z."/>
            <person name="Herrero J."/>
            <person name="Searle S.M."/>
            <person name="Enright A."/>
            <person name="Geisler R."/>
            <person name="Plasterk R.H."/>
            <person name="Lee C."/>
            <person name="Westerfield M."/>
            <person name="de Jong P.J."/>
            <person name="Zon L.I."/>
            <person name="Postlethwait J.H."/>
            <person name="Nusslein-Volhard C."/>
            <person name="Hubbard T.J."/>
            <person name="Roest Crollius H."/>
            <person name="Rogers J."/>
            <person name="Stemple D.L."/>
        </authorList>
    </citation>
    <scope>NUCLEOTIDE SEQUENCE [LARGE SCALE GENOMIC DNA]</scope>
    <source>
        <strain evidence="8">Tuebingen</strain>
    </source>
</reference>
<reference key="2">
    <citation type="submission" date="2004-09" db="EMBL/GenBank/DDBJ databases">
        <authorList>
            <consortium name="NIH - Zebrafish Gene Collection (ZGC) project"/>
        </authorList>
    </citation>
    <scope>NUCLEOTIDE SEQUENCE [LARGE SCALE MRNA]</scope>
    <source>
        <tissue evidence="7">Kidney</tissue>
    </source>
</reference>
<reference evidence="6" key="3">
    <citation type="journal article" date="2010" name="Development">
        <title>Moesin1 and Ve-cadherin are required in endothelial cells during in vivo tubulogenesis.</title>
        <authorList>
            <person name="Wang Y."/>
            <person name="Kaiser M.S."/>
            <person name="Larson J.D."/>
            <person name="Nasevicius A."/>
            <person name="Clark K.J."/>
            <person name="Wadman S.A."/>
            <person name="Roberg-Perez S.E."/>
            <person name="Ekker S.C."/>
            <person name="Hackett P.B."/>
            <person name="McGrail M."/>
            <person name="Essner J.J."/>
        </authorList>
    </citation>
    <scope>FUNCTION</scope>
    <scope>SUBCELLULAR LOCATION</scope>
    <scope>DEVELOPMENTAL STAGE</scope>
    <scope>DISRUPTION PHENOTYPE</scope>
</reference>
<evidence type="ECO:0000255" key="1"/>
<evidence type="ECO:0000255" key="2">
    <source>
        <dbReference type="PROSITE-ProRule" id="PRU00084"/>
    </source>
</evidence>
<evidence type="ECO:0000256" key="3">
    <source>
        <dbReference type="SAM" id="MobiDB-lite"/>
    </source>
</evidence>
<evidence type="ECO:0000269" key="4">
    <source>
    </source>
</evidence>
<evidence type="ECO:0000303" key="5">
    <source>
    </source>
</evidence>
<evidence type="ECO:0000305" key="6"/>
<evidence type="ECO:0000312" key="7">
    <source>
        <dbReference type="EMBL" id="AAH81551.1"/>
    </source>
</evidence>
<evidence type="ECO:0000312" key="8">
    <source>
        <dbReference type="Proteomes" id="UP000000437"/>
    </source>
</evidence>
<evidence type="ECO:0000312" key="9">
    <source>
        <dbReference type="ZFIN" id="ZDB-GENE-021211-2"/>
    </source>
</evidence>
<comment type="function">
    <text evidence="4">Positively regulates endothelial adherens junction formation and stabilization (PubMed:20736288). Is thereby required for intersegmental vessel luminal membrane formation and stabilization during tubulogenesis in the early stages of development, independent of blood flow dynamics (PubMed:20736288).</text>
</comment>
<comment type="subcellular location">
    <subcellularLocation>
        <location evidence="4">Cell membrane</location>
        <topology evidence="6">Peripheral membrane protein</topology>
    </subcellularLocation>
    <subcellularLocation>
        <location evidence="4">Cell junction</location>
    </subcellularLocation>
</comment>
<comment type="developmental stage">
    <text evidence="4">Expressed in endothelial cells in the dorsal aorta at 18 hpf (at protein level) (PubMed:20736288). Expressed in epithelial cells in the otic vesicle at 24 hpf (at protein level) (PubMed:20736288). Expressed in vacuoles during endothelial tubulogenesis which are actively trafficked to and fuse with developing intersegmental vessel lumens from 28 hpf (at protein level) (PubMed:20736288). Expressed at the apical membrane of intersegmental vessels during the formation of the primary lumen at 28 to 33 hpf (at protein level) (PubMed:20736288).</text>
</comment>
<comment type="disruption phenotype">
    <text evidence="4">Morpholino knockdowns show intersegmental vessel and axial vessel tube defects from 39 hpf onwards resulting in disrupted blood flow (PubMed:20736288). Loss of intersegmental primary lumen in intersegmental vessels at 32-33 hpf, vessels instead show a narrow and disorganized appearance without a visible lumen at 54 hpf (PubMed:20736288). Reduces zo1-expressing tight junctions and cdh5-expressing adherens junctions along the length of intersegmental vessels during tubulogenesis between 32 and 54 hpf (PubMed:20736288). Embryos are overall smaller in size with edema in the pericardial and yolk compartments and increased cell death in the anterior central nervous system from 39 hpf onwards (PubMed:20736288).</text>
</comment>
<dbReference type="EMBL" id="CR812469">
    <property type="status" value="NOT_ANNOTATED_CDS"/>
    <property type="molecule type" value="Genomic_DNA"/>
</dbReference>
<dbReference type="EMBL" id="CT027689">
    <property type="status" value="NOT_ANNOTATED_CDS"/>
    <property type="molecule type" value="Genomic_DNA"/>
</dbReference>
<dbReference type="EMBL" id="BC081551">
    <property type="protein sequence ID" value="AAH81551.1"/>
    <property type="molecule type" value="mRNA"/>
</dbReference>
<dbReference type="RefSeq" id="NP_001004296.1">
    <property type="nucleotide sequence ID" value="NM_001004296.1"/>
</dbReference>
<dbReference type="SMR" id="Q66I42"/>
<dbReference type="FunCoup" id="Q66I42">
    <property type="interactions" value="3944"/>
</dbReference>
<dbReference type="STRING" id="7955.ENSDARP00000017246"/>
<dbReference type="PaxDb" id="7955-ENSDARP00000017246"/>
<dbReference type="Ensembl" id="ENSDART00000016214">
    <property type="protein sequence ID" value="ENSDARP00000017246"/>
    <property type="gene ID" value="ENSDARG00000058128"/>
</dbReference>
<dbReference type="GeneID" id="286739"/>
<dbReference type="KEGG" id="dre:286739"/>
<dbReference type="AGR" id="ZFIN:ZDB-GENE-021211-2"/>
<dbReference type="CTD" id="286739"/>
<dbReference type="ZFIN" id="ZDB-GENE-021211-2">
    <property type="gene designation" value="msna"/>
</dbReference>
<dbReference type="eggNOG" id="KOG3529">
    <property type="taxonomic scope" value="Eukaryota"/>
</dbReference>
<dbReference type="HOGENOM" id="CLU_003623_6_2_1"/>
<dbReference type="OMA" id="WEERIMS"/>
<dbReference type="OrthoDB" id="6018897at2759"/>
<dbReference type="TreeFam" id="TF313935"/>
<dbReference type="Proteomes" id="UP000000437">
    <property type="component" value="Alternate scaffold 5"/>
</dbReference>
<dbReference type="Proteomes" id="UP000000437">
    <property type="component" value="Chromosome 5"/>
</dbReference>
<dbReference type="Bgee" id="ENSDARG00000058128">
    <property type="expression patterns" value="Expressed in swim bladder and 28 other cell types or tissues"/>
</dbReference>
<dbReference type="GO" id="GO:0005912">
    <property type="term" value="C:adherens junction"/>
    <property type="evidence" value="ECO:0000318"/>
    <property type="project" value="GO_Central"/>
</dbReference>
<dbReference type="GO" id="GO:0045177">
    <property type="term" value="C:apical part of cell"/>
    <property type="evidence" value="ECO:0000318"/>
    <property type="project" value="GO_Central"/>
</dbReference>
<dbReference type="GO" id="GO:0005856">
    <property type="term" value="C:cytoskeleton"/>
    <property type="evidence" value="ECO:0007669"/>
    <property type="project" value="InterPro"/>
</dbReference>
<dbReference type="GO" id="GO:0030175">
    <property type="term" value="C:filopodium"/>
    <property type="evidence" value="ECO:0000318"/>
    <property type="project" value="GO_Central"/>
</dbReference>
<dbReference type="GO" id="GO:0005902">
    <property type="term" value="C:microvillus"/>
    <property type="evidence" value="ECO:0000318"/>
    <property type="project" value="GO_Central"/>
</dbReference>
<dbReference type="GO" id="GO:0005886">
    <property type="term" value="C:plasma membrane"/>
    <property type="evidence" value="ECO:0000318"/>
    <property type="project" value="GO_Central"/>
</dbReference>
<dbReference type="GO" id="GO:0003779">
    <property type="term" value="F:actin binding"/>
    <property type="evidence" value="ECO:0000318"/>
    <property type="project" value="GO_Central"/>
</dbReference>
<dbReference type="GO" id="GO:0050839">
    <property type="term" value="F:cell adhesion molecule binding"/>
    <property type="evidence" value="ECO:0000318"/>
    <property type="project" value="GO_Central"/>
</dbReference>
<dbReference type="GO" id="GO:0072554">
    <property type="term" value="P:blood vessel lumenization"/>
    <property type="evidence" value="ECO:0000315"/>
    <property type="project" value="ZFIN"/>
</dbReference>
<dbReference type="GO" id="GO:0007492">
    <property type="term" value="P:endoderm development"/>
    <property type="evidence" value="ECO:0000314"/>
    <property type="project" value="ZFIN"/>
</dbReference>
<dbReference type="GO" id="GO:2000643">
    <property type="term" value="P:positive regulation of early endosome to late endosome transport"/>
    <property type="evidence" value="ECO:0000318"/>
    <property type="project" value="GO_Central"/>
</dbReference>
<dbReference type="GO" id="GO:1902966">
    <property type="term" value="P:positive regulation of protein localization to early endosome"/>
    <property type="evidence" value="ECO:0000318"/>
    <property type="project" value="GO_Central"/>
</dbReference>
<dbReference type="GO" id="GO:0008360">
    <property type="term" value="P:regulation of cell shape"/>
    <property type="evidence" value="ECO:0000318"/>
    <property type="project" value="GO_Central"/>
</dbReference>
<dbReference type="GO" id="GO:1902115">
    <property type="term" value="P:regulation of organelle assembly"/>
    <property type="evidence" value="ECO:0000318"/>
    <property type="project" value="GO_Central"/>
</dbReference>
<dbReference type="CDD" id="cd14473">
    <property type="entry name" value="FERM_B-lobe"/>
    <property type="match status" value="1"/>
</dbReference>
<dbReference type="CDD" id="cd13194">
    <property type="entry name" value="FERM_C_ERM"/>
    <property type="match status" value="1"/>
</dbReference>
<dbReference type="CDD" id="cd17187">
    <property type="entry name" value="FERM_F1_ERM"/>
    <property type="match status" value="1"/>
</dbReference>
<dbReference type="FunFam" id="2.30.29.30:FF:000003">
    <property type="entry name" value="Radixin isoform 1"/>
    <property type="match status" value="1"/>
</dbReference>
<dbReference type="FunFam" id="1.20.80.10:FF:000002">
    <property type="entry name" value="radixin isoform X1"/>
    <property type="match status" value="1"/>
</dbReference>
<dbReference type="FunFam" id="3.10.20.90:FF:000013">
    <property type="entry name" value="radixin isoform X1"/>
    <property type="match status" value="1"/>
</dbReference>
<dbReference type="FunFam" id="1.20.5.450:FF:000001">
    <property type="entry name" value="radixin isoform X2"/>
    <property type="match status" value="1"/>
</dbReference>
<dbReference type="Gene3D" id="1.20.5.450">
    <property type="match status" value="1"/>
</dbReference>
<dbReference type="Gene3D" id="1.20.80.10">
    <property type="match status" value="1"/>
</dbReference>
<dbReference type="Gene3D" id="6.10.360.10">
    <property type="match status" value="1"/>
</dbReference>
<dbReference type="Gene3D" id="3.10.20.90">
    <property type="entry name" value="Phosphatidylinositol 3-kinase Catalytic Subunit, Chain A, domain 1"/>
    <property type="match status" value="1"/>
</dbReference>
<dbReference type="Gene3D" id="2.30.29.30">
    <property type="entry name" value="Pleckstrin-homology domain (PH domain)/Phosphotyrosine-binding domain (PTB)"/>
    <property type="match status" value="1"/>
</dbReference>
<dbReference type="InterPro" id="IPR019749">
    <property type="entry name" value="Band_41_domain"/>
</dbReference>
<dbReference type="InterPro" id="IPR011174">
    <property type="entry name" value="ERM"/>
</dbReference>
<dbReference type="InterPro" id="IPR011259">
    <property type="entry name" value="ERM_C_dom"/>
</dbReference>
<dbReference type="InterPro" id="IPR041789">
    <property type="entry name" value="ERM_FERM_C"/>
</dbReference>
<dbReference type="InterPro" id="IPR046810">
    <property type="entry name" value="ERM_helical"/>
</dbReference>
<dbReference type="InterPro" id="IPR000798">
    <property type="entry name" value="Ez/rad/moesin-like"/>
</dbReference>
<dbReference type="InterPro" id="IPR014352">
    <property type="entry name" value="FERM/acyl-CoA-bd_prot_sf"/>
</dbReference>
<dbReference type="InterPro" id="IPR035963">
    <property type="entry name" value="FERM_2"/>
</dbReference>
<dbReference type="InterPro" id="IPR019748">
    <property type="entry name" value="FERM_central"/>
</dbReference>
<dbReference type="InterPro" id="IPR019747">
    <property type="entry name" value="FERM_CS"/>
</dbReference>
<dbReference type="InterPro" id="IPR000299">
    <property type="entry name" value="FERM_domain"/>
</dbReference>
<dbReference type="InterPro" id="IPR018979">
    <property type="entry name" value="FERM_N"/>
</dbReference>
<dbReference type="InterPro" id="IPR018980">
    <property type="entry name" value="FERM_PH-like_C"/>
</dbReference>
<dbReference type="InterPro" id="IPR008954">
    <property type="entry name" value="Moesin_tail_sf"/>
</dbReference>
<dbReference type="InterPro" id="IPR011993">
    <property type="entry name" value="PH-like_dom_sf"/>
</dbReference>
<dbReference type="InterPro" id="IPR029071">
    <property type="entry name" value="Ubiquitin-like_domsf"/>
</dbReference>
<dbReference type="PANTHER" id="PTHR23281">
    <property type="entry name" value="MERLIN/MOESIN/EZRIN/RADIXIN"/>
    <property type="match status" value="1"/>
</dbReference>
<dbReference type="Pfam" id="PF00769">
    <property type="entry name" value="ERM_C"/>
    <property type="match status" value="1"/>
</dbReference>
<dbReference type="Pfam" id="PF20492">
    <property type="entry name" value="ERM_helical"/>
    <property type="match status" value="1"/>
</dbReference>
<dbReference type="Pfam" id="PF09380">
    <property type="entry name" value="FERM_C"/>
    <property type="match status" value="1"/>
</dbReference>
<dbReference type="Pfam" id="PF00373">
    <property type="entry name" value="FERM_M"/>
    <property type="match status" value="1"/>
</dbReference>
<dbReference type="Pfam" id="PF09379">
    <property type="entry name" value="FERM_N"/>
    <property type="match status" value="1"/>
</dbReference>
<dbReference type="PIRSF" id="PIRSF002305">
    <property type="entry name" value="ERM"/>
    <property type="match status" value="1"/>
</dbReference>
<dbReference type="PRINTS" id="PR00935">
    <property type="entry name" value="BAND41"/>
</dbReference>
<dbReference type="PRINTS" id="PR00661">
    <property type="entry name" value="ERMFAMILY"/>
</dbReference>
<dbReference type="SMART" id="SM00295">
    <property type="entry name" value="B41"/>
    <property type="match status" value="1"/>
</dbReference>
<dbReference type="SMART" id="SM01196">
    <property type="entry name" value="FERM_C"/>
    <property type="match status" value="1"/>
</dbReference>
<dbReference type="SUPFAM" id="SSF48678">
    <property type="entry name" value="Moesin tail domain"/>
    <property type="match status" value="1"/>
</dbReference>
<dbReference type="SUPFAM" id="SSF50729">
    <property type="entry name" value="PH domain-like"/>
    <property type="match status" value="1"/>
</dbReference>
<dbReference type="SUPFAM" id="SSF47031">
    <property type="entry name" value="Second domain of FERM"/>
    <property type="match status" value="1"/>
</dbReference>
<dbReference type="SUPFAM" id="SSF54236">
    <property type="entry name" value="Ubiquitin-like"/>
    <property type="match status" value="1"/>
</dbReference>
<dbReference type="PROSITE" id="PS00660">
    <property type="entry name" value="FERM_1"/>
    <property type="match status" value="1"/>
</dbReference>
<dbReference type="PROSITE" id="PS00661">
    <property type="entry name" value="FERM_2"/>
    <property type="match status" value="1"/>
</dbReference>
<dbReference type="PROSITE" id="PS50057">
    <property type="entry name" value="FERM_3"/>
    <property type="match status" value="1"/>
</dbReference>
<accession>Q66I42</accession>
<accession>A0A8M1N247</accession>
<accession>A2CF04</accession>
<name>MOESA_DANRE</name>
<sequence>MPKTISVRVTTMDAELEFAIQPSTTGKQLFDQVVKTIGLREVWFFGLQYQDTKGFSTWLKLNKKVTAQDVRKESPLLFKFRAKFYPEDVSEELIQEATQRLFFLQVKEGILNDDIYCPPETAVLLASYAVQAKYADYNKDAHTPGYLSNEKLLPQRVLEQHKLNKEQWEERIQVWHEEHKGMLREDSMMEYLKIAQDLEMYGVNYFSIKNKKGSELWLGVDALGLNIYEQNDKMTPKIGFPWSEIRNISFNDKKFVIKPIDKKAPDFVFYAQRLRINKRILALCMGNHELYMRRRKPDTIEVQQMKAQAKEEKNHKKMERALLEDERKKREQAEKEKEKIEKEKEELMERLRVIEEQTRKAQQELEEQTRKALELEQERKRAQEEAERLERERRLAEEAKSALLQQSESQMKNQEHLATELAELTSKISLLEDAKKKKEDEALEWQTKATMVQEDLEKTKEELKNKVMSSHVTEPVHGENDNDEGDESSAEASAELTSAAAYKDRSEEERMTEAEKNERVQKHLLALTSELANARDETKKTQNDIIHAENVRAGRDKYKTLRQIRSGNTKQRIDEFECM</sequence>
<proteinExistence type="evidence at protein level"/>
<feature type="chain" id="PRO_0000460461" description="Moesin a">
    <location>
        <begin position="1"/>
        <end position="579"/>
    </location>
</feature>
<feature type="domain" description="FERM" evidence="2">
    <location>
        <begin position="5"/>
        <end position="295"/>
    </location>
</feature>
<feature type="region of interest" description="Disordered" evidence="3">
    <location>
        <begin position="308"/>
        <end position="341"/>
    </location>
</feature>
<feature type="region of interest" description="Disordered" evidence="3">
    <location>
        <begin position="376"/>
        <end position="418"/>
    </location>
</feature>
<feature type="region of interest" description="Disordered" evidence="3">
    <location>
        <begin position="464"/>
        <end position="519"/>
    </location>
</feature>
<feature type="coiled-coil region" evidence="1">
    <location>
        <begin position="306"/>
        <end position="448"/>
    </location>
</feature>
<feature type="coiled-coil region" evidence="1">
    <location>
        <begin position="517"/>
        <end position="551"/>
    </location>
</feature>
<feature type="compositionally biased region" description="Basic and acidic residues" evidence="3">
    <location>
        <begin position="376"/>
        <end position="400"/>
    </location>
</feature>
<feature type="compositionally biased region" description="Low complexity" evidence="3">
    <location>
        <begin position="490"/>
        <end position="501"/>
    </location>
</feature>
<feature type="compositionally biased region" description="Basic and acidic residues" evidence="3">
    <location>
        <begin position="502"/>
        <end position="519"/>
    </location>
</feature>
<keyword id="KW-0965">Cell junction</keyword>
<keyword id="KW-1003">Cell membrane</keyword>
<keyword id="KW-0175">Coiled coil</keyword>
<keyword id="KW-0472">Membrane</keyword>
<keyword id="KW-1185">Reference proteome</keyword>
<organism evidence="8">
    <name type="scientific">Danio rerio</name>
    <name type="common">Zebrafish</name>
    <name type="synonym">Brachydanio rerio</name>
    <dbReference type="NCBI Taxonomy" id="7955"/>
    <lineage>
        <taxon>Eukaryota</taxon>
        <taxon>Metazoa</taxon>
        <taxon>Chordata</taxon>
        <taxon>Craniata</taxon>
        <taxon>Vertebrata</taxon>
        <taxon>Euteleostomi</taxon>
        <taxon>Actinopterygii</taxon>
        <taxon>Neopterygii</taxon>
        <taxon>Teleostei</taxon>
        <taxon>Ostariophysi</taxon>
        <taxon>Cypriniformes</taxon>
        <taxon>Danionidae</taxon>
        <taxon>Danioninae</taxon>
        <taxon>Danio</taxon>
    </lineage>
</organism>